<reference key="1">
    <citation type="journal article" date="2012" name="Stand. Genomic Sci.">
        <title>Complete genome sequence of Polynucleobacter necessarius subsp. asymbioticus type strain (QLW-P1DMWA-1(T)).</title>
        <authorList>
            <person name="Meincke L."/>
            <person name="Copeland A."/>
            <person name="Lapidus A."/>
            <person name="Lucas S."/>
            <person name="Berry K.W."/>
            <person name="Del Rio T.G."/>
            <person name="Hammon N."/>
            <person name="Dalin E."/>
            <person name="Tice H."/>
            <person name="Pitluck S."/>
            <person name="Richardson P."/>
            <person name="Bruce D."/>
            <person name="Goodwin L."/>
            <person name="Han C."/>
            <person name="Tapia R."/>
            <person name="Detter J.C."/>
            <person name="Schmutz J."/>
            <person name="Brettin T."/>
            <person name="Larimer F."/>
            <person name="Land M."/>
            <person name="Hauser L."/>
            <person name="Kyrpides N.C."/>
            <person name="Ivanova N."/>
            <person name="Goker M."/>
            <person name="Woyke T."/>
            <person name="Wu Q.L."/>
            <person name="Pockl M."/>
            <person name="Hahn M.W."/>
            <person name="Klenk H.P."/>
        </authorList>
    </citation>
    <scope>NUCLEOTIDE SEQUENCE [LARGE SCALE GENOMIC DNA]</scope>
    <source>
        <strain>DSM 18221 / CIP 109841 / QLW-P1DMWA-1</strain>
    </source>
</reference>
<keyword id="KW-0963">Cytoplasm</keyword>
<keyword id="KW-0275">Fatty acid biosynthesis</keyword>
<keyword id="KW-0276">Fatty acid metabolism</keyword>
<keyword id="KW-0444">Lipid biosynthesis</keyword>
<keyword id="KW-0443">Lipid metabolism</keyword>
<keyword id="KW-0460">Magnesium</keyword>
<keyword id="KW-0479">Metal-binding</keyword>
<keyword id="KW-1185">Reference proteome</keyword>
<keyword id="KW-0808">Transferase</keyword>
<comment type="function">
    <text evidence="1">Transfers the 4'-phosphopantetheine moiety from coenzyme A to a Ser of acyl-carrier-protein.</text>
</comment>
<comment type="catalytic activity">
    <reaction evidence="1">
        <text>apo-[ACP] + CoA = holo-[ACP] + adenosine 3',5'-bisphosphate + H(+)</text>
        <dbReference type="Rhea" id="RHEA:12068"/>
        <dbReference type="Rhea" id="RHEA-COMP:9685"/>
        <dbReference type="Rhea" id="RHEA-COMP:9690"/>
        <dbReference type="ChEBI" id="CHEBI:15378"/>
        <dbReference type="ChEBI" id="CHEBI:29999"/>
        <dbReference type="ChEBI" id="CHEBI:57287"/>
        <dbReference type="ChEBI" id="CHEBI:58343"/>
        <dbReference type="ChEBI" id="CHEBI:64479"/>
        <dbReference type="EC" id="2.7.8.7"/>
    </reaction>
</comment>
<comment type="cofactor">
    <cofactor evidence="1">
        <name>Mg(2+)</name>
        <dbReference type="ChEBI" id="CHEBI:18420"/>
    </cofactor>
</comment>
<comment type="subcellular location">
    <subcellularLocation>
        <location evidence="1">Cytoplasm</location>
    </subcellularLocation>
</comment>
<comment type="similarity">
    <text evidence="1">Belongs to the P-Pant transferase superfamily. AcpS family.</text>
</comment>
<protein>
    <recommendedName>
        <fullName evidence="1">Holo-[acyl-carrier-protein] synthase</fullName>
        <shortName evidence="1">Holo-ACP synthase</shortName>
        <ecNumber evidence="1">2.7.8.7</ecNumber>
    </recommendedName>
    <alternativeName>
        <fullName evidence="1">4'-phosphopantetheinyl transferase AcpS</fullName>
    </alternativeName>
</protein>
<accession>A4SVW6</accession>
<evidence type="ECO:0000255" key="1">
    <source>
        <dbReference type="HAMAP-Rule" id="MF_00101"/>
    </source>
</evidence>
<feature type="chain" id="PRO_1000093905" description="Holo-[acyl-carrier-protein] synthase">
    <location>
        <begin position="1"/>
        <end position="130"/>
    </location>
</feature>
<feature type="binding site" evidence="1">
    <location>
        <position position="8"/>
    </location>
    <ligand>
        <name>Mg(2+)</name>
        <dbReference type="ChEBI" id="CHEBI:18420"/>
    </ligand>
</feature>
<feature type="binding site" evidence="1">
    <location>
        <position position="62"/>
    </location>
    <ligand>
        <name>Mg(2+)</name>
        <dbReference type="ChEBI" id="CHEBI:18420"/>
    </ligand>
</feature>
<sequence length="130" mass="14547">MIIGIGTDILQIERLQAAYDRTNGRLAEKVLGPDEMLVFKHRLARNHKRGIAFLATRFAAKEAFSKAIGLGMHMPMTWRSLQTLNEPSGKPITSYLGALAQFMAEKNWEAHITVSDEQDMAIAHVIVTQK</sequence>
<gene>
    <name evidence="1" type="primary">acpS</name>
    <name type="ordered locus">Pnuc_0410</name>
</gene>
<dbReference type="EC" id="2.7.8.7" evidence="1"/>
<dbReference type="EMBL" id="CP000655">
    <property type="protein sequence ID" value="ABP33630.1"/>
    <property type="molecule type" value="Genomic_DNA"/>
</dbReference>
<dbReference type="RefSeq" id="WP_011902255.1">
    <property type="nucleotide sequence ID" value="NC_009379.1"/>
</dbReference>
<dbReference type="SMR" id="A4SVW6"/>
<dbReference type="GeneID" id="31480761"/>
<dbReference type="KEGG" id="pnu:Pnuc_0410"/>
<dbReference type="eggNOG" id="COG0736">
    <property type="taxonomic scope" value="Bacteria"/>
</dbReference>
<dbReference type="HOGENOM" id="CLU_089696_3_1_4"/>
<dbReference type="Proteomes" id="UP000000231">
    <property type="component" value="Chromosome"/>
</dbReference>
<dbReference type="GO" id="GO:0005737">
    <property type="term" value="C:cytoplasm"/>
    <property type="evidence" value="ECO:0007669"/>
    <property type="project" value="UniProtKB-SubCell"/>
</dbReference>
<dbReference type="GO" id="GO:0008897">
    <property type="term" value="F:holo-[acyl-carrier-protein] synthase activity"/>
    <property type="evidence" value="ECO:0007669"/>
    <property type="project" value="UniProtKB-UniRule"/>
</dbReference>
<dbReference type="GO" id="GO:0000287">
    <property type="term" value="F:magnesium ion binding"/>
    <property type="evidence" value="ECO:0007669"/>
    <property type="project" value="UniProtKB-UniRule"/>
</dbReference>
<dbReference type="GO" id="GO:0006633">
    <property type="term" value="P:fatty acid biosynthetic process"/>
    <property type="evidence" value="ECO:0007669"/>
    <property type="project" value="UniProtKB-UniRule"/>
</dbReference>
<dbReference type="Gene3D" id="3.90.470.20">
    <property type="entry name" value="4'-phosphopantetheinyl transferase domain"/>
    <property type="match status" value="1"/>
</dbReference>
<dbReference type="HAMAP" id="MF_00101">
    <property type="entry name" value="AcpS"/>
    <property type="match status" value="1"/>
</dbReference>
<dbReference type="InterPro" id="IPR008278">
    <property type="entry name" value="4-PPantetheinyl_Trfase_dom"/>
</dbReference>
<dbReference type="InterPro" id="IPR037143">
    <property type="entry name" value="4-PPantetheinyl_Trfase_dom_sf"/>
</dbReference>
<dbReference type="InterPro" id="IPR002582">
    <property type="entry name" value="ACPS"/>
</dbReference>
<dbReference type="InterPro" id="IPR004568">
    <property type="entry name" value="Ppantetheine-prot_Trfase_dom"/>
</dbReference>
<dbReference type="NCBIfam" id="TIGR00516">
    <property type="entry name" value="acpS"/>
    <property type="match status" value="1"/>
</dbReference>
<dbReference type="NCBIfam" id="TIGR00556">
    <property type="entry name" value="pantethn_trn"/>
    <property type="match status" value="1"/>
</dbReference>
<dbReference type="Pfam" id="PF01648">
    <property type="entry name" value="ACPS"/>
    <property type="match status" value="1"/>
</dbReference>
<dbReference type="SUPFAM" id="SSF56214">
    <property type="entry name" value="4'-phosphopantetheinyl transferase"/>
    <property type="match status" value="1"/>
</dbReference>
<proteinExistence type="inferred from homology"/>
<name>ACPS_POLAQ</name>
<organism>
    <name type="scientific">Polynucleobacter asymbioticus (strain DSM 18221 / CIP 109841 / QLW-P1DMWA-1)</name>
    <name type="common">Polynucleobacter necessarius subsp. asymbioticus</name>
    <dbReference type="NCBI Taxonomy" id="312153"/>
    <lineage>
        <taxon>Bacteria</taxon>
        <taxon>Pseudomonadati</taxon>
        <taxon>Pseudomonadota</taxon>
        <taxon>Betaproteobacteria</taxon>
        <taxon>Burkholderiales</taxon>
        <taxon>Burkholderiaceae</taxon>
        <taxon>Polynucleobacter</taxon>
    </lineage>
</organism>